<sequence>MTIPDVPTQTLPDEGEIGFVHIGSLTTEAGAVIDDVHIAVQRWGELSPTRDNVVVVLHALTGDSHVTGPAGPGHPTGGWWDEMVGPGAPIDTDRWCAVATNVLGGCRGSTGPSSRTRDGKPWGSRFPRISIRDQVEADIAALAALGIDEVAAVVGGSMGGARALEWIVGHPSRVRAGLLLAVGARATADQIGTQCTQIAAIKSDPNWQGGDYHDTGRTPDAGLAIARRFAHLTYRGEVELDTRFGNDAQLDEDPANGGRYAVQSYLEYQGVKLVERFDAGSYVVLTEALNSHDVGRARGGVRKALRSCPVPVVVGGITSDRLYPLRLQQELAEQLPGCAELQVVDSICGHDGFLVESEAVGEMIRKTLLLAGSQSAGPGGAGPGSRKGTTRR</sequence>
<reference key="1">
    <citation type="submission" date="2006-10" db="EMBL/GenBank/DDBJ databases">
        <authorList>
            <person name="Fleischmann R.D."/>
            <person name="Dodson R.J."/>
            <person name="Haft D.H."/>
            <person name="Merkel J.S."/>
            <person name="Nelson W.C."/>
            <person name="Fraser C.M."/>
        </authorList>
    </citation>
    <scope>NUCLEOTIDE SEQUENCE [LARGE SCALE GENOMIC DNA]</scope>
    <source>
        <strain>104</strain>
    </source>
</reference>
<name>METXA_MYCA1</name>
<proteinExistence type="inferred from homology"/>
<accession>A0QKL5</accession>
<feature type="chain" id="PRO_1000021883" description="Homoserine O-acetyltransferase">
    <location>
        <begin position="1"/>
        <end position="392"/>
    </location>
</feature>
<feature type="domain" description="AB hydrolase-1" evidence="1">
    <location>
        <begin position="52"/>
        <end position="356"/>
    </location>
</feature>
<feature type="region of interest" description="Disordered" evidence="2">
    <location>
        <begin position="373"/>
        <end position="392"/>
    </location>
</feature>
<feature type="active site" description="Nucleophile" evidence="1">
    <location>
        <position position="157"/>
    </location>
</feature>
<feature type="active site" evidence="1">
    <location>
        <position position="320"/>
    </location>
</feature>
<feature type="active site" evidence="1">
    <location>
        <position position="350"/>
    </location>
</feature>
<feature type="binding site" evidence="1">
    <location>
        <position position="227"/>
    </location>
    <ligand>
        <name>substrate</name>
    </ligand>
</feature>
<feature type="binding site" evidence="1">
    <location>
        <position position="351"/>
    </location>
    <ligand>
        <name>substrate</name>
    </ligand>
</feature>
<evidence type="ECO:0000255" key="1">
    <source>
        <dbReference type="HAMAP-Rule" id="MF_00296"/>
    </source>
</evidence>
<evidence type="ECO:0000256" key="2">
    <source>
        <dbReference type="SAM" id="MobiDB-lite"/>
    </source>
</evidence>
<protein>
    <recommendedName>
        <fullName evidence="1">Homoserine O-acetyltransferase</fullName>
        <shortName evidence="1">HAT</shortName>
        <ecNumber evidence="1">2.3.1.31</ecNumber>
    </recommendedName>
    <alternativeName>
        <fullName evidence="1">Homoserine transacetylase</fullName>
        <shortName evidence="1">HTA</shortName>
    </alternativeName>
</protein>
<keyword id="KW-0012">Acyltransferase</keyword>
<keyword id="KW-0028">Amino-acid biosynthesis</keyword>
<keyword id="KW-0963">Cytoplasm</keyword>
<keyword id="KW-0486">Methionine biosynthesis</keyword>
<keyword id="KW-0808">Transferase</keyword>
<organism>
    <name type="scientific">Mycobacterium avium (strain 104)</name>
    <dbReference type="NCBI Taxonomy" id="243243"/>
    <lineage>
        <taxon>Bacteria</taxon>
        <taxon>Bacillati</taxon>
        <taxon>Actinomycetota</taxon>
        <taxon>Actinomycetes</taxon>
        <taxon>Mycobacteriales</taxon>
        <taxon>Mycobacteriaceae</taxon>
        <taxon>Mycobacterium</taxon>
        <taxon>Mycobacterium avium complex (MAC)</taxon>
    </lineage>
</organism>
<gene>
    <name evidence="1" type="primary">metXA</name>
    <name type="ordered locus">MAV_4316</name>
</gene>
<comment type="function">
    <text evidence="1">Transfers an acetyl group from acetyl-CoA to L-homoserine, forming acetyl-L-homoserine.</text>
</comment>
<comment type="catalytic activity">
    <reaction evidence="1">
        <text>L-homoserine + acetyl-CoA = O-acetyl-L-homoserine + CoA</text>
        <dbReference type="Rhea" id="RHEA:13701"/>
        <dbReference type="ChEBI" id="CHEBI:57287"/>
        <dbReference type="ChEBI" id="CHEBI:57288"/>
        <dbReference type="ChEBI" id="CHEBI:57476"/>
        <dbReference type="ChEBI" id="CHEBI:57716"/>
        <dbReference type="EC" id="2.3.1.31"/>
    </reaction>
</comment>
<comment type="pathway">
    <text evidence="1">Amino-acid biosynthesis; L-methionine biosynthesis via de novo pathway; O-acetyl-L-homoserine from L-homoserine: step 1/1.</text>
</comment>
<comment type="subunit">
    <text evidence="1">Homodimer.</text>
</comment>
<comment type="subcellular location">
    <subcellularLocation>
        <location evidence="1">Cytoplasm</location>
    </subcellularLocation>
</comment>
<comment type="similarity">
    <text evidence="1">Belongs to the AB hydrolase superfamily. MetX family.</text>
</comment>
<dbReference type="EC" id="2.3.1.31" evidence="1"/>
<dbReference type="EMBL" id="CP000479">
    <property type="protein sequence ID" value="ABK65042.1"/>
    <property type="molecule type" value="Genomic_DNA"/>
</dbReference>
<dbReference type="SMR" id="A0QKL5"/>
<dbReference type="ESTHER" id="mycpa-q73ub0">
    <property type="family name" value="Homoserine_transacetylase"/>
</dbReference>
<dbReference type="KEGG" id="mav:MAV_4316"/>
<dbReference type="HOGENOM" id="CLU_028760_1_0_11"/>
<dbReference type="UniPathway" id="UPA00051">
    <property type="reaction ID" value="UER00074"/>
</dbReference>
<dbReference type="Proteomes" id="UP000001574">
    <property type="component" value="Chromosome"/>
</dbReference>
<dbReference type="GO" id="GO:0005737">
    <property type="term" value="C:cytoplasm"/>
    <property type="evidence" value="ECO:0007669"/>
    <property type="project" value="UniProtKB-SubCell"/>
</dbReference>
<dbReference type="GO" id="GO:0004414">
    <property type="term" value="F:homoserine O-acetyltransferase activity"/>
    <property type="evidence" value="ECO:0007669"/>
    <property type="project" value="UniProtKB-UniRule"/>
</dbReference>
<dbReference type="GO" id="GO:0009092">
    <property type="term" value="P:homoserine metabolic process"/>
    <property type="evidence" value="ECO:0007669"/>
    <property type="project" value="TreeGrafter"/>
</dbReference>
<dbReference type="GO" id="GO:0009086">
    <property type="term" value="P:methionine biosynthetic process"/>
    <property type="evidence" value="ECO:0007669"/>
    <property type="project" value="UniProtKB-UniRule"/>
</dbReference>
<dbReference type="Gene3D" id="3.40.50.1820">
    <property type="entry name" value="alpha/beta hydrolase"/>
    <property type="match status" value="1"/>
</dbReference>
<dbReference type="HAMAP" id="MF_00296">
    <property type="entry name" value="MetX_acyltransf"/>
    <property type="match status" value="1"/>
</dbReference>
<dbReference type="InterPro" id="IPR000073">
    <property type="entry name" value="AB_hydrolase_1"/>
</dbReference>
<dbReference type="InterPro" id="IPR029058">
    <property type="entry name" value="AB_hydrolase_fold"/>
</dbReference>
<dbReference type="InterPro" id="IPR008220">
    <property type="entry name" value="HAT_MetX-like"/>
</dbReference>
<dbReference type="NCBIfam" id="TIGR01392">
    <property type="entry name" value="homoserO_Ac_trn"/>
    <property type="match status" value="1"/>
</dbReference>
<dbReference type="NCBIfam" id="NF001209">
    <property type="entry name" value="PRK00175.1"/>
    <property type="match status" value="1"/>
</dbReference>
<dbReference type="PANTHER" id="PTHR32268">
    <property type="entry name" value="HOMOSERINE O-ACETYLTRANSFERASE"/>
    <property type="match status" value="1"/>
</dbReference>
<dbReference type="PANTHER" id="PTHR32268:SF11">
    <property type="entry name" value="HOMOSERINE O-ACETYLTRANSFERASE"/>
    <property type="match status" value="1"/>
</dbReference>
<dbReference type="Pfam" id="PF00561">
    <property type="entry name" value="Abhydrolase_1"/>
    <property type="match status" value="1"/>
</dbReference>
<dbReference type="PIRSF" id="PIRSF000443">
    <property type="entry name" value="Homoser_Ac_trans"/>
    <property type="match status" value="1"/>
</dbReference>
<dbReference type="SUPFAM" id="SSF53474">
    <property type="entry name" value="alpha/beta-Hydrolases"/>
    <property type="match status" value="1"/>
</dbReference>